<protein>
    <recommendedName>
        <fullName evidence="1">Uracil-DNA glycosylase</fullName>
        <shortName evidence="1">UDG</shortName>
        <ecNumber evidence="1">3.2.2.27</ecNumber>
    </recommendedName>
</protein>
<name>UNG_BREBN</name>
<organism>
    <name type="scientific">Brevibacillus brevis (strain 47 / JCM 6285 / NBRC 100599)</name>
    <dbReference type="NCBI Taxonomy" id="358681"/>
    <lineage>
        <taxon>Bacteria</taxon>
        <taxon>Bacillati</taxon>
        <taxon>Bacillota</taxon>
        <taxon>Bacilli</taxon>
        <taxon>Bacillales</taxon>
        <taxon>Paenibacillaceae</taxon>
        <taxon>Brevibacillus</taxon>
    </lineage>
</organism>
<evidence type="ECO:0000255" key="1">
    <source>
        <dbReference type="HAMAP-Rule" id="MF_00148"/>
    </source>
</evidence>
<gene>
    <name evidence="1" type="primary">ung</name>
    <name type="ordered locus">BBR47_55370</name>
</gene>
<reference key="1">
    <citation type="submission" date="2005-03" db="EMBL/GenBank/DDBJ databases">
        <title>Brevibacillus brevis strain 47, complete genome.</title>
        <authorList>
            <person name="Hosoyama A."/>
            <person name="Yamada R."/>
            <person name="Hongo Y."/>
            <person name="Terui Y."/>
            <person name="Ankai A."/>
            <person name="Masuyama W."/>
            <person name="Sekiguchi M."/>
            <person name="Takeda T."/>
            <person name="Asano K."/>
            <person name="Ohji S."/>
            <person name="Ichikawa N."/>
            <person name="Narita S."/>
            <person name="Aoki N."/>
            <person name="Miura H."/>
            <person name="Matsushita S."/>
            <person name="Sekigawa T."/>
            <person name="Yamagata H."/>
            <person name="Yoshikawa H."/>
            <person name="Udaka S."/>
            <person name="Tanikawa S."/>
            <person name="Fujita N."/>
        </authorList>
    </citation>
    <scope>NUCLEOTIDE SEQUENCE [LARGE SCALE GENOMIC DNA]</scope>
    <source>
        <strain>47 / JCM 6285 / NBRC 100599</strain>
    </source>
</reference>
<sequence length="229" mass="26499">MTTILQNDWAPVLADEFEKPYYVKLRQTLKEEYQTQTIYPDMFHIFTALHLTEYQNAKVVILGQDPYHGPGQAHGLSFSVKPGIKPPPSLVNIYKELKSDVGFEIPQHGYLNHWAKQGVMMLNTVLTVRRGTPNSHKDIGWETFTDRIIHLLNDRETPLVFILWGKHAQEKAAFIDRNKHFVIASPHPSPFSANRGFFGSRPFSRTNEFLRSRGLQEIDWQLPMQVEEE</sequence>
<feature type="chain" id="PRO_1000199772" description="Uracil-DNA glycosylase">
    <location>
        <begin position="1"/>
        <end position="229"/>
    </location>
</feature>
<feature type="active site" description="Proton acceptor" evidence="1">
    <location>
        <position position="65"/>
    </location>
</feature>
<comment type="function">
    <text evidence="1">Excises uracil residues from the DNA which can arise as a result of misincorporation of dUMP residues by DNA polymerase or due to deamination of cytosine.</text>
</comment>
<comment type="catalytic activity">
    <reaction evidence="1">
        <text>Hydrolyzes single-stranded DNA or mismatched double-stranded DNA and polynucleotides, releasing free uracil.</text>
        <dbReference type="EC" id="3.2.2.27"/>
    </reaction>
</comment>
<comment type="subcellular location">
    <subcellularLocation>
        <location evidence="1">Cytoplasm</location>
    </subcellularLocation>
</comment>
<comment type="similarity">
    <text evidence="1">Belongs to the uracil-DNA glycosylase (UDG) superfamily. UNG family.</text>
</comment>
<dbReference type="EC" id="3.2.2.27" evidence="1"/>
<dbReference type="EMBL" id="AP008955">
    <property type="protein sequence ID" value="BAH46514.1"/>
    <property type="molecule type" value="Genomic_DNA"/>
</dbReference>
<dbReference type="RefSeq" id="WP_015893705.1">
    <property type="nucleotide sequence ID" value="NC_012491.1"/>
</dbReference>
<dbReference type="SMR" id="C0Z887"/>
<dbReference type="STRING" id="358681.BBR47_55370"/>
<dbReference type="KEGG" id="bbe:BBR47_55370"/>
<dbReference type="eggNOG" id="COG0692">
    <property type="taxonomic scope" value="Bacteria"/>
</dbReference>
<dbReference type="HOGENOM" id="CLU_032162_3_0_9"/>
<dbReference type="Proteomes" id="UP000001877">
    <property type="component" value="Chromosome"/>
</dbReference>
<dbReference type="GO" id="GO:0005737">
    <property type="term" value="C:cytoplasm"/>
    <property type="evidence" value="ECO:0007669"/>
    <property type="project" value="UniProtKB-SubCell"/>
</dbReference>
<dbReference type="GO" id="GO:0004844">
    <property type="term" value="F:uracil DNA N-glycosylase activity"/>
    <property type="evidence" value="ECO:0007669"/>
    <property type="project" value="UniProtKB-UniRule"/>
</dbReference>
<dbReference type="GO" id="GO:0097510">
    <property type="term" value="P:base-excision repair, AP site formation via deaminated base removal"/>
    <property type="evidence" value="ECO:0007669"/>
    <property type="project" value="TreeGrafter"/>
</dbReference>
<dbReference type="CDD" id="cd10027">
    <property type="entry name" value="UDG-F1-like"/>
    <property type="match status" value="1"/>
</dbReference>
<dbReference type="FunFam" id="3.40.470.10:FF:000001">
    <property type="entry name" value="Uracil-DNA glycosylase"/>
    <property type="match status" value="1"/>
</dbReference>
<dbReference type="Gene3D" id="3.40.470.10">
    <property type="entry name" value="Uracil-DNA glycosylase-like domain"/>
    <property type="match status" value="1"/>
</dbReference>
<dbReference type="HAMAP" id="MF_00148">
    <property type="entry name" value="UDG"/>
    <property type="match status" value="1"/>
</dbReference>
<dbReference type="InterPro" id="IPR002043">
    <property type="entry name" value="UDG_fam1"/>
</dbReference>
<dbReference type="InterPro" id="IPR018085">
    <property type="entry name" value="Ura-DNA_Glyclase_AS"/>
</dbReference>
<dbReference type="InterPro" id="IPR005122">
    <property type="entry name" value="Uracil-DNA_glycosylase-like"/>
</dbReference>
<dbReference type="InterPro" id="IPR036895">
    <property type="entry name" value="Uracil-DNA_glycosylase-like_sf"/>
</dbReference>
<dbReference type="NCBIfam" id="NF003588">
    <property type="entry name" value="PRK05254.1-1"/>
    <property type="match status" value="1"/>
</dbReference>
<dbReference type="NCBIfam" id="NF003589">
    <property type="entry name" value="PRK05254.1-2"/>
    <property type="match status" value="1"/>
</dbReference>
<dbReference type="NCBIfam" id="NF003591">
    <property type="entry name" value="PRK05254.1-4"/>
    <property type="match status" value="1"/>
</dbReference>
<dbReference type="NCBIfam" id="NF003592">
    <property type="entry name" value="PRK05254.1-5"/>
    <property type="match status" value="1"/>
</dbReference>
<dbReference type="NCBIfam" id="TIGR00628">
    <property type="entry name" value="ung"/>
    <property type="match status" value="1"/>
</dbReference>
<dbReference type="PANTHER" id="PTHR11264">
    <property type="entry name" value="URACIL-DNA GLYCOSYLASE"/>
    <property type="match status" value="1"/>
</dbReference>
<dbReference type="PANTHER" id="PTHR11264:SF0">
    <property type="entry name" value="URACIL-DNA GLYCOSYLASE"/>
    <property type="match status" value="1"/>
</dbReference>
<dbReference type="Pfam" id="PF03167">
    <property type="entry name" value="UDG"/>
    <property type="match status" value="1"/>
</dbReference>
<dbReference type="SMART" id="SM00986">
    <property type="entry name" value="UDG"/>
    <property type="match status" value="1"/>
</dbReference>
<dbReference type="SMART" id="SM00987">
    <property type="entry name" value="UreE_C"/>
    <property type="match status" value="1"/>
</dbReference>
<dbReference type="SUPFAM" id="SSF52141">
    <property type="entry name" value="Uracil-DNA glycosylase-like"/>
    <property type="match status" value="1"/>
</dbReference>
<dbReference type="PROSITE" id="PS00130">
    <property type="entry name" value="U_DNA_GLYCOSYLASE"/>
    <property type="match status" value="1"/>
</dbReference>
<keyword id="KW-0963">Cytoplasm</keyword>
<keyword id="KW-0227">DNA damage</keyword>
<keyword id="KW-0234">DNA repair</keyword>
<keyword id="KW-0378">Hydrolase</keyword>
<keyword id="KW-1185">Reference proteome</keyword>
<proteinExistence type="inferred from homology"/>
<accession>C0Z887</accession>